<protein>
    <recommendedName>
        <fullName evidence="2">D-alanine--D-alanine ligase</fullName>
        <ecNumber evidence="2">6.3.2.4</ecNumber>
    </recommendedName>
    <alternativeName>
        <fullName evidence="2">D-Ala-D-Ala ligase</fullName>
    </alternativeName>
    <alternativeName>
        <fullName evidence="2">D-alanylalanine synthetase</fullName>
    </alternativeName>
</protein>
<gene>
    <name evidence="2" type="primary">ddl</name>
    <name type="ordered locus">jk1217</name>
</gene>
<sequence length="373" mass="38958">MSNEAKKHARTTVAVLYGGQSTEHSVSCISAGAVIDHLDPEIYEVVPVGITEAGAWVPGTTDTSRLRADGRDMPRVEDGGVHVQLTFGGAGTAGSAGSGAAGEMRYVTGPQAGEVFAQVDVVFPVLHGVNGEDGTVQGVLDLAGVRYVGNGVLASAAGMDKDFTKRLAREAGIPVGEELILFQPRELTAEEKERLGLPVFVKPARGGSSIGISKVDSWEEFDAAIDLAFSNDNKVIVEAMIHGAEVECGVLQHADGSIVSSVPAMLNGTEDGAEGFYGFDAKYVDSTVSATIPAPLPAETIKEIRQLAIRTFNALGCDGIARVDFFATENGPVLNEINTMPGFTPISMYPKMFAAEGVSFGDLVSALIARALA</sequence>
<reference key="1">
    <citation type="journal article" date="2005" name="J. Bacteriol.">
        <title>Complete genome sequence and analysis of the multiresistant nosocomial pathogen Corynebacterium jeikeium K411, a lipid-requiring bacterium of the human skin flora.</title>
        <authorList>
            <person name="Tauch A."/>
            <person name="Kaiser O."/>
            <person name="Hain T."/>
            <person name="Goesmann A."/>
            <person name="Weisshaar B."/>
            <person name="Albersmeier A."/>
            <person name="Bekel T."/>
            <person name="Bischoff N."/>
            <person name="Brune I."/>
            <person name="Chakraborty T."/>
            <person name="Kalinowski J."/>
            <person name="Meyer F."/>
            <person name="Rupp O."/>
            <person name="Schneiker S."/>
            <person name="Viehoever P."/>
            <person name="Puehler A."/>
        </authorList>
    </citation>
    <scope>NUCLEOTIDE SEQUENCE [LARGE SCALE GENOMIC DNA]</scope>
    <source>
        <strain>K411</strain>
    </source>
</reference>
<organism>
    <name type="scientific">Corynebacterium jeikeium (strain K411)</name>
    <dbReference type="NCBI Taxonomy" id="306537"/>
    <lineage>
        <taxon>Bacteria</taxon>
        <taxon>Bacillati</taxon>
        <taxon>Actinomycetota</taxon>
        <taxon>Actinomycetes</taxon>
        <taxon>Mycobacteriales</taxon>
        <taxon>Corynebacteriaceae</taxon>
        <taxon>Corynebacterium</taxon>
    </lineage>
</organism>
<name>DDL_CORJK</name>
<keyword id="KW-0067">ATP-binding</keyword>
<keyword id="KW-0133">Cell shape</keyword>
<keyword id="KW-0961">Cell wall biogenesis/degradation</keyword>
<keyword id="KW-0963">Cytoplasm</keyword>
<keyword id="KW-0436">Ligase</keyword>
<keyword id="KW-0460">Magnesium</keyword>
<keyword id="KW-0464">Manganese</keyword>
<keyword id="KW-0479">Metal-binding</keyword>
<keyword id="KW-0547">Nucleotide-binding</keyword>
<keyword id="KW-0573">Peptidoglycan synthesis</keyword>
<keyword id="KW-1185">Reference proteome</keyword>
<comment type="function">
    <text evidence="2">Cell wall formation.</text>
</comment>
<comment type="catalytic activity">
    <reaction evidence="2">
        <text>2 D-alanine + ATP = D-alanyl-D-alanine + ADP + phosphate + H(+)</text>
        <dbReference type="Rhea" id="RHEA:11224"/>
        <dbReference type="ChEBI" id="CHEBI:15378"/>
        <dbReference type="ChEBI" id="CHEBI:30616"/>
        <dbReference type="ChEBI" id="CHEBI:43474"/>
        <dbReference type="ChEBI" id="CHEBI:57416"/>
        <dbReference type="ChEBI" id="CHEBI:57822"/>
        <dbReference type="ChEBI" id="CHEBI:456216"/>
        <dbReference type="EC" id="6.3.2.4"/>
    </reaction>
</comment>
<comment type="cofactor">
    <cofactor evidence="1">
        <name>Mg(2+)</name>
        <dbReference type="ChEBI" id="CHEBI:18420"/>
    </cofactor>
    <cofactor evidence="1">
        <name>Mn(2+)</name>
        <dbReference type="ChEBI" id="CHEBI:29035"/>
    </cofactor>
    <text evidence="1">Binds 2 magnesium or manganese ions per subunit.</text>
</comment>
<comment type="pathway">
    <text evidence="2">Cell wall biogenesis; peptidoglycan biosynthesis.</text>
</comment>
<comment type="subcellular location">
    <subcellularLocation>
        <location evidence="2">Cytoplasm</location>
    </subcellularLocation>
</comment>
<comment type="similarity">
    <text evidence="2">Belongs to the D-alanine--D-alanine ligase family.</text>
</comment>
<feature type="chain" id="PRO_0000341086" description="D-alanine--D-alanine ligase">
    <location>
        <begin position="1"/>
        <end position="373"/>
    </location>
</feature>
<feature type="domain" description="ATP-grasp" evidence="2">
    <location>
        <begin position="165"/>
        <end position="369"/>
    </location>
</feature>
<feature type="binding site" evidence="2">
    <location>
        <begin position="192"/>
        <end position="247"/>
    </location>
    <ligand>
        <name>ATP</name>
        <dbReference type="ChEBI" id="CHEBI:30616"/>
    </ligand>
</feature>
<feature type="binding site" evidence="2">
    <location>
        <position position="324"/>
    </location>
    <ligand>
        <name>Mg(2+)</name>
        <dbReference type="ChEBI" id="CHEBI:18420"/>
        <label>1</label>
    </ligand>
</feature>
<feature type="binding site" evidence="2">
    <location>
        <position position="336"/>
    </location>
    <ligand>
        <name>Mg(2+)</name>
        <dbReference type="ChEBI" id="CHEBI:18420"/>
        <label>1</label>
    </ligand>
</feature>
<feature type="binding site" evidence="2">
    <location>
        <position position="336"/>
    </location>
    <ligand>
        <name>Mg(2+)</name>
        <dbReference type="ChEBI" id="CHEBI:18420"/>
        <label>2</label>
    </ligand>
</feature>
<feature type="binding site" evidence="2">
    <location>
        <position position="338"/>
    </location>
    <ligand>
        <name>Mg(2+)</name>
        <dbReference type="ChEBI" id="CHEBI:18420"/>
        <label>2</label>
    </ligand>
</feature>
<evidence type="ECO:0000250" key="1"/>
<evidence type="ECO:0000255" key="2">
    <source>
        <dbReference type="HAMAP-Rule" id="MF_00047"/>
    </source>
</evidence>
<dbReference type="EC" id="6.3.2.4" evidence="2"/>
<dbReference type="EMBL" id="CR931997">
    <property type="protein sequence ID" value="CAI37381.1"/>
    <property type="molecule type" value="Genomic_DNA"/>
</dbReference>
<dbReference type="RefSeq" id="WP_011273733.1">
    <property type="nucleotide sequence ID" value="NC_007164.1"/>
</dbReference>
<dbReference type="SMR" id="Q4JUX6"/>
<dbReference type="STRING" id="306537.jk1217"/>
<dbReference type="KEGG" id="cjk:jk1217"/>
<dbReference type="PATRIC" id="fig|306537.10.peg.1232"/>
<dbReference type="eggNOG" id="COG1181">
    <property type="taxonomic scope" value="Bacteria"/>
</dbReference>
<dbReference type="HOGENOM" id="CLU_039268_0_1_11"/>
<dbReference type="OrthoDB" id="9813261at2"/>
<dbReference type="UniPathway" id="UPA00219"/>
<dbReference type="Proteomes" id="UP000000545">
    <property type="component" value="Chromosome"/>
</dbReference>
<dbReference type="GO" id="GO:0005829">
    <property type="term" value="C:cytosol"/>
    <property type="evidence" value="ECO:0007669"/>
    <property type="project" value="TreeGrafter"/>
</dbReference>
<dbReference type="GO" id="GO:0005524">
    <property type="term" value="F:ATP binding"/>
    <property type="evidence" value="ECO:0007669"/>
    <property type="project" value="UniProtKB-KW"/>
</dbReference>
<dbReference type="GO" id="GO:0008716">
    <property type="term" value="F:D-alanine-D-alanine ligase activity"/>
    <property type="evidence" value="ECO:0007669"/>
    <property type="project" value="UniProtKB-UniRule"/>
</dbReference>
<dbReference type="GO" id="GO:0046872">
    <property type="term" value="F:metal ion binding"/>
    <property type="evidence" value="ECO:0007669"/>
    <property type="project" value="UniProtKB-KW"/>
</dbReference>
<dbReference type="GO" id="GO:0071555">
    <property type="term" value="P:cell wall organization"/>
    <property type="evidence" value="ECO:0007669"/>
    <property type="project" value="UniProtKB-KW"/>
</dbReference>
<dbReference type="GO" id="GO:0009252">
    <property type="term" value="P:peptidoglycan biosynthetic process"/>
    <property type="evidence" value="ECO:0007669"/>
    <property type="project" value="UniProtKB-UniRule"/>
</dbReference>
<dbReference type="GO" id="GO:0008360">
    <property type="term" value="P:regulation of cell shape"/>
    <property type="evidence" value="ECO:0007669"/>
    <property type="project" value="UniProtKB-KW"/>
</dbReference>
<dbReference type="FunFam" id="3.30.1490.20:FF:000007">
    <property type="entry name" value="D-alanine--D-alanine ligase"/>
    <property type="match status" value="1"/>
</dbReference>
<dbReference type="FunFam" id="3.30.470.20:FF:000008">
    <property type="entry name" value="D-alanine--D-alanine ligase"/>
    <property type="match status" value="1"/>
</dbReference>
<dbReference type="Gene3D" id="3.40.50.20">
    <property type="match status" value="1"/>
</dbReference>
<dbReference type="Gene3D" id="3.30.1490.20">
    <property type="entry name" value="ATP-grasp fold, A domain"/>
    <property type="match status" value="1"/>
</dbReference>
<dbReference type="Gene3D" id="3.30.470.20">
    <property type="entry name" value="ATP-grasp fold, B domain"/>
    <property type="match status" value="1"/>
</dbReference>
<dbReference type="HAMAP" id="MF_00047">
    <property type="entry name" value="Dala_Dala_lig"/>
    <property type="match status" value="1"/>
</dbReference>
<dbReference type="InterPro" id="IPR011761">
    <property type="entry name" value="ATP-grasp"/>
</dbReference>
<dbReference type="InterPro" id="IPR013815">
    <property type="entry name" value="ATP_grasp_subdomain_1"/>
</dbReference>
<dbReference type="InterPro" id="IPR000291">
    <property type="entry name" value="D-Ala_lig_Van_CS"/>
</dbReference>
<dbReference type="InterPro" id="IPR005905">
    <property type="entry name" value="D_ala_D_ala"/>
</dbReference>
<dbReference type="InterPro" id="IPR011095">
    <property type="entry name" value="Dala_Dala_lig_C"/>
</dbReference>
<dbReference type="InterPro" id="IPR011127">
    <property type="entry name" value="Dala_Dala_lig_N"/>
</dbReference>
<dbReference type="InterPro" id="IPR016185">
    <property type="entry name" value="PreATP-grasp_dom_sf"/>
</dbReference>
<dbReference type="NCBIfam" id="TIGR01205">
    <property type="entry name" value="D_ala_D_alaTIGR"/>
    <property type="match status" value="1"/>
</dbReference>
<dbReference type="NCBIfam" id="NF002528">
    <property type="entry name" value="PRK01966.1-4"/>
    <property type="match status" value="1"/>
</dbReference>
<dbReference type="PANTHER" id="PTHR23132">
    <property type="entry name" value="D-ALANINE--D-ALANINE LIGASE"/>
    <property type="match status" value="1"/>
</dbReference>
<dbReference type="PANTHER" id="PTHR23132:SF25">
    <property type="entry name" value="D-ALANINE--D-ALANINE LIGASE A"/>
    <property type="match status" value="1"/>
</dbReference>
<dbReference type="Pfam" id="PF07478">
    <property type="entry name" value="Dala_Dala_lig_C"/>
    <property type="match status" value="1"/>
</dbReference>
<dbReference type="Pfam" id="PF01820">
    <property type="entry name" value="Dala_Dala_lig_N"/>
    <property type="match status" value="1"/>
</dbReference>
<dbReference type="PIRSF" id="PIRSF039102">
    <property type="entry name" value="Ddl/VanB"/>
    <property type="match status" value="1"/>
</dbReference>
<dbReference type="SUPFAM" id="SSF56059">
    <property type="entry name" value="Glutathione synthetase ATP-binding domain-like"/>
    <property type="match status" value="1"/>
</dbReference>
<dbReference type="SUPFAM" id="SSF52440">
    <property type="entry name" value="PreATP-grasp domain"/>
    <property type="match status" value="1"/>
</dbReference>
<dbReference type="PROSITE" id="PS50975">
    <property type="entry name" value="ATP_GRASP"/>
    <property type="match status" value="1"/>
</dbReference>
<dbReference type="PROSITE" id="PS00843">
    <property type="entry name" value="DALA_DALA_LIGASE_1"/>
    <property type="match status" value="1"/>
</dbReference>
<dbReference type="PROSITE" id="PS00844">
    <property type="entry name" value="DALA_DALA_LIGASE_2"/>
    <property type="match status" value="1"/>
</dbReference>
<accession>Q4JUX6</accession>
<proteinExistence type="inferred from homology"/>